<evidence type="ECO:0000255" key="1">
    <source>
        <dbReference type="HAMAP-Rule" id="MF_00373"/>
    </source>
</evidence>
<evidence type="ECO:0000256" key="2">
    <source>
        <dbReference type="SAM" id="MobiDB-lite"/>
    </source>
</evidence>
<evidence type="ECO:0000305" key="3"/>
<gene>
    <name evidence="1" type="primary">rpmB</name>
    <name type="ordered locus">UUR10_0201</name>
</gene>
<feature type="chain" id="PRO_1000121707" description="Large ribosomal subunit protein bL28">
    <location>
        <begin position="1"/>
        <end position="64"/>
    </location>
</feature>
<feature type="region of interest" description="Disordered" evidence="2">
    <location>
        <begin position="1"/>
        <end position="26"/>
    </location>
</feature>
<proteinExistence type="inferred from homology"/>
<reference key="1">
    <citation type="submission" date="2008-10" db="EMBL/GenBank/DDBJ databases">
        <title>Genome sequence of Ureaplasma urealyticum serovar 10 ATCC-33699.</title>
        <authorList>
            <person name="Shrivastava S."/>
            <person name="Methe B.A."/>
            <person name="Glass J."/>
            <person name="White K."/>
            <person name="Duffy L.B."/>
        </authorList>
    </citation>
    <scope>NUCLEOTIDE SEQUENCE [LARGE SCALE GENOMIC DNA]</scope>
    <source>
        <strain>ATCC 33699 / Western</strain>
    </source>
</reference>
<organism>
    <name type="scientific">Ureaplasma urealyticum serovar 10 (strain ATCC 33699 / Western)</name>
    <dbReference type="NCBI Taxonomy" id="565575"/>
    <lineage>
        <taxon>Bacteria</taxon>
        <taxon>Bacillati</taxon>
        <taxon>Mycoplasmatota</taxon>
        <taxon>Mycoplasmoidales</taxon>
        <taxon>Mycoplasmoidaceae</taxon>
        <taxon>Ureaplasma</taxon>
    </lineage>
</organism>
<sequence length="64" mass="7192">MARRDQLTGKGPLSGNTRSHAMNHSKRRWNVNLQKATIKTENGSQRVLVSAKTLKTLKKHNLLA</sequence>
<name>RL28_UREU1</name>
<comment type="similarity">
    <text evidence="1">Belongs to the bacterial ribosomal protein bL28 family.</text>
</comment>
<keyword id="KW-0687">Ribonucleoprotein</keyword>
<keyword id="KW-0689">Ribosomal protein</keyword>
<accession>B5ZB16</accession>
<protein>
    <recommendedName>
        <fullName evidence="1">Large ribosomal subunit protein bL28</fullName>
    </recommendedName>
    <alternativeName>
        <fullName evidence="3">50S ribosomal protein L28</fullName>
    </alternativeName>
</protein>
<dbReference type="EMBL" id="CP001184">
    <property type="protein sequence ID" value="ACI59763.1"/>
    <property type="molecule type" value="Genomic_DNA"/>
</dbReference>
<dbReference type="RefSeq" id="WP_004027297.1">
    <property type="nucleotide sequence ID" value="NC_011374.1"/>
</dbReference>
<dbReference type="SMR" id="B5ZB16"/>
<dbReference type="STRING" id="565575.UUR10_0201"/>
<dbReference type="KEGG" id="uue:UUR10_0201"/>
<dbReference type="eggNOG" id="COG0227">
    <property type="taxonomic scope" value="Bacteria"/>
</dbReference>
<dbReference type="HOGENOM" id="CLU_064548_7_2_14"/>
<dbReference type="OrthoDB" id="9805609at2"/>
<dbReference type="Proteomes" id="UP000002018">
    <property type="component" value="Chromosome"/>
</dbReference>
<dbReference type="GO" id="GO:1990904">
    <property type="term" value="C:ribonucleoprotein complex"/>
    <property type="evidence" value="ECO:0007669"/>
    <property type="project" value="UniProtKB-KW"/>
</dbReference>
<dbReference type="GO" id="GO:0005840">
    <property type="term" value="C:ribosome"/>
    <property type="evidence" value="ECO:0007669"/>
    <property type="project" value="UniProtKB-KW"/>
</dbReference>
<dbReference type="GO" id="GO:0003735">
    <property type="term" value="F:structural constituent of ribosome"/>
    <property type="evidence" value="ECO:0007669"/>
    <property type="project" value="InterPro"/>
</dbReference>
<dbReference type="GO" id="GO:0006412">
    <property type="term" value="P:translation"/>
    <property type="evidence" value="ECO:0007669"/>
    <property type="project" value="UniProtKB-UniRule"/>
</dbReference>
<dbReference type="Gene3D" id="2.30.170.40">
    <property type="entry name" value="Ribosomal protein L28/L24"/>
    <property type="match status" value="1"/>
</dbReference>
<dbReference type="HAMAP" id="MF_00373">
    <property type="entry name" value="Ribosomal_bL28"/>
    <property type="match status" value="1"/>
</dbReference>
<dbReference type="InterPro" id="IPR050096">
    <property type="entry name" value="Bacterial_rp_bL28"/>
</dbReference>
<dbReference type="InterPro" id="IPR026569">
    <property type="entry name" value="Ribosomal_bL28"/>
</dbReference>
<dbReference type="InterPro" id="IPR034704">
    <property type="entry name" value="Ribosomal_bL28/bL31-like_sf"/>
</dbReference>
<dbReference type="InterPro" id="IPR001383">
    <property type="entry name" value="Ribosomal_bL28_bact-type"/>
</dbReference>
<dbReference type="InterPro" id="IPR037147">
    <property type="entry name" value="Ribosomal_bL28_sf"/>
</dbReference>
<dbReference type="NCBIfam" id="TIGR00009">
    <property type="entry name" value="L28"/>
    <property type="match status" value="1"/>
</dbReference>
<dbReference type="PANTHER" id="PTHR39080">
    <property type="entry name" value="50S RIBOSOMAL PROTEIN L28"/>
    <property type="match status" value="1"/>
</dbReference>
<dbReference type="PANTHER" id="PTHR39080:SF1">
    <property type="entry name" value="LARGE RIBOSOMAL SUBUNIT PROTEIN BL28A"/>
    <property type="match status" value="1"/>
</dbReference>
<dbReference type="Pfam" id="PF00830">
    <property type="entry name" value="Ribosomal_L28"/>
    <property type="match status" value="1"/>
</dbReference>
<dbReference type="SUPFAM" id="SSF143800">
    <property type="entry name" value="L28p-like"/>
    <property type="match status" value="1"/>
</dbReference>